<dbReference type="EMBL" id="EU912438">
    <property type="protein sequence ID" value="ACF70885.1"/>
    <property type="molecule type" value="Genomic_DNA"/>
</dbReference>
<dbReference type="RefSeq" id="YP_002327468.1">
    <property type="nucleotide sequence ID" value="NC_011600.1"/>
</dbReference>
<dbReference type="SMR" id="B7T1R9"/>
<dbReference type="GeneID" id="7055976"/>
<dbReference type="GO" id="GO:0009535">
    <property type="term" value="C:chloroplast thylakoid membrane"/>
    <property type="evidence" value="ECO:0007669"/>
    <property type="project" value="UniProtKB-SubCell"/>
</dbReference>
<dbReference type="GO" id="GO:0045259">
    <property type="term" value="C:proton-transporting ATP synthase complex"/>
    <property type="evidence" value="ECO:0007669"/>
    <property type="project" value="UniProtKB-KW"/>
</dbReference>
<dbReference type="GO" id="GO:0046933">
    <property type="term" value="F:proton-transporting ATP synthase activity, rotational mechanism"/>
    <property type="evidence" value="ECO:0007669"/>
    <property type="project" value="UniProtKB-UniRule"/>
</dbReference>
<dbReference type="GO" id="GO:0046961">
    <property type="term" value="F:proton-transporting ATPase activity, rotational mechanism"/>
    <property type="evidence" value="ECO:0007669"/>
    <property type="project" value="TreeGrafter"/>
</dbReference>
<dbReference type="CDD" id="cd06503">
    <property type="entry name" value="ATP-synt_Fo_b"/>
    <property type="match status" value="1"/>
</dbReference>
<dbReference type="HAMAP" id="MF_01398">
    <property type="entry name" value="ATP_synth_b_bprime"/>
    <property type="match status" value="1"/>
</dbReference>
<dbReference type="HAMAP" id="MF_01399">
    <property type="entry name" value="ATP_synth_bprime"/>
    <property type="match status" value="1"/>
</dbReference>
<dbReference type="InterPro" id="IPR034679">
    <property type="entry name" value="ATP_synth_b"/>
</dbReference>
<dbReference type="InterPro" id="IPR002146">
    <property type="entry name" value="ATP_synth_b/b'su_bac/chlpt"/>
</dbReference>
<dbReference type="InterPro" id="IPR050059">
    <property type="entry name" value="ATP_synthase_B_chain"/>
</dbReference>
<dbReference type="PANTHER" id="PTHR33445">
    <property type="entry name" value="ATP SYNTHASE SUBUNIT B', CHLOROPLASTIC"/>
    <property type="match status" value="1"/>
</dbReference>
<dbReference type="PANTHER" id="PTHR33445:SF2">
    <property type="entry name" value="ATP SYNTHASE SUBUNIT B', CHLOROPLASTIC"/>
    <property type="match status" value="1"/>
</dbReference>
<dbReference type="Pfam" id="PF00430">
    <property type="entry name" value="ATP-synt_B"/>
    <property type="match status" value="1"/>
</dbReference>
<reference key="1">
    <citation type="journal article" date="2008" name="Proc. Natl. Acad. Sci. U.S.A.">
        <title>Horizontal gene transfer of the algal nuclear gene psbO to the photosynthetic sea slug Elysia chlorotica.</title>
        <authorList>
            <person name="Rumpho M.E."/>
            <person name="Worful J.M."/>
            <person name="Lee J."/>
            <person name="Kannan K."/>
            <person name="Tyler M.S."/>
            <person name="Bhattacharya D."/>
            <person name="Moustafa A."/>
            <person name="Manhart J.R."/>
        </authorList>
    </citation>
    <scope>NUCLEOTIDE SEQUENCE [LARGE SCALE GENOMIC DNA]</scope>
    <source>
        <strain>CCMP2940</strain>
    </source>
</reference>
<proteinExistence type="inferred from homology"/>
<protein>
    <recommendedName>
        <fullName evidence="1">ATP synthase subunit b', chloroplastic</fullName>
    </recommendedName>
    <alternativeName>
        <fullName evidence="1">ATP synthase F(0) sector subunit b'</fullName>
    </alternativeName>
    <alternativeName>
        <fullName evidence="1">ATPase subunit II</fullName>
    </alternativeName>
</protein>
<keyword id="KW-0066">ATP synthesis</keyword>
<keyword id="KW-0138">CF(0)</keyword>
<keyword id="KW-0150">Chloroplast</keyword>
<keyword id="KW-0375">Hydrogen ion transport</keyword>
<keyword id="KW-0406">Ion transport</keyword>
<keyword id="KW-0472">Membrane</keyword>
<keyword id="KW-0934">Plastid</keyword>
<keyword id="KW-0793">Thylakoid</keyword>
<keyword id="KW-0812">Transmembrane</keyword>
<keyword id="KW-1133">Transmembrane helix</keyword>
<keyword id="KW-0813">Transport</keyword>
<accession>B7T1R9</accession>
<sequence length="154" mass="17749">MLKFSFLFLTVEKPGGLFDFDGTLPLIAIQFLILMFLLNILLYTPLLKIIDERSEYIANNLQEASIILNKANELSSQYEKEFSKIKKEVELDSLTLQNLHKNILEIEIISSQKIFENYLNQTINNFDSEKEKILTSLDEEINSLSSEIITKIVA</sequence>
<name>ATPF2_VAULI</name>
<organism>
    <name type="scientific">Vaucheria litorea</name>
    <name type="common">Yellow-green alga</name>
    <dbReference type="NCBI Taxonomy" id="109269"/>
    <lineage>
        <taxon>Eukaryota</taxon>
        <taxon>Sar</taxon>
        <taxon>Stramenopiles</taxon>
        <taxon>Ochrophyta</taxon>
        <taxon>PX clade</taxon>
        <taxon>Xanthophyceae</taxon>
        <taxon>Vaucheriales</taxon>
        <taxon>Vaucheriaceae</taxon>
        <taxon>Vaucheria</taxon>
    </lineage>
</organism>
<feature type="chain" id="PRO_0000369065" description="ATP synthase subunit b', chloroplastic">
    <location>
        <begin position="1"/>
        <end position="154"/>
    </location>
</feature>
<feature type="transmembrane region" description="Helical" evidence="1">
    <location>
        <begin position="22"/>
        <end position="42"/>
    </location>
</feature>
<geneLocation type="chloroplast"/>
<comment type="function">
    <text evidence="1">F(1)F(0) ATP synthase produces ATP from ADP in the presence of a proton or sodium gradient. F-type ATPases consist of two structural domains, F(1) containing the extramembraneous catalytic core and F(0) containing the membrane proton channel, linked together by a central stalk and a peripheral stalk. During catalysis, ATP synthesis in the catalytic domain of F(1) is coupled via a rotary mechanism of the central stalk subunits to proton translocation.</text>
</comment>
<comment type="function">
    <text evidence="1">Component of the F(0) channel, it forms part of the peripheral stalk, linking F(1) to F(0). The b'-subunit is a diverged and duplicated form of b found in plants and photosynthetic bacteria.</text>
</comment>
<comment type="subunit">
    <text evidence="1">F-type ATPases have 2 components, F(1) - the catalytic core - and F(0) - the membrane proton channel. F(1) has five subunits: alpha(3), beta(3), gamma(1), delta(1), epsilon(1). F(0) has four main subunits: a(1), b(1), b'(1) and c(10-14). The alpha and beta chains form an alternating ring which encloses part of the gamma chain. F(1) is attached to F(0) by a central stalk formed by the gamma and epsilon chains, while a peripheral stalk is formed by the delta, b and b' chains.</text>
</comment>
<comment type="subcellular location">
    <subcellularLocation>
        <location evidence="1">Plastid</location>
        <location evidence="1">Chloroplast thylakoid membrane</location>
        <topology evidence="1">Single-pass membrane protein</topology>
    </subcellularLocation>
</comment>
<comment type="miscellaneous">
    <text>In plastids the F-type ATPase is also known as CF(1)CF(0).</text>
</comment>
<comment type="similarity">
    <text evidence="1">Belongs to the ATPase B chain family.</text>
</comment>
<gene>
    <name evidence="1" type="primary">atpF2</name>
    <name evidence="1" type="synonym">atpG</name>
</gene>
<evidence type="ECO:0000255" key="1">
    <source>
        <dbReference type="HAMAP-Rule" id="MF_01399"/>
    </source>
</evidence>